<dbReference type="EC" id="3.5.1.110" evidence="1"/>
<dbReference type="EMBL" id="CP000946">
    <property type="protein sequence ID" value="ACA78215.1"/>
    <property type="molecule type" value="Genomic_DNA"/>
</dbReference>
<dbReference type="SMR" id="B1IV86"/>
<dbReference type="KEGG" id="ecl:EcolC_2584"/>
<dbReference type="HOGENOM" id="CLU_068979_8_0_6"/>
<dbReference type="GO" id="GO:0016811">
    <property type="term" value="F:hydrolase activity, acting on carbon-nitrogen (but not peptide) bonds, in linear amides"/>
    <property type="evidence" value="ECO:0007669"/>
    <property type="project" value="UniProtKB-UniRule"/>
</dbReference>
<dbReference type="GO" id="GO:0019740">
    <property type="term" value="P:nitrogen utilization"/>
    <property type="evidence" value="ECO:0007669"/>
    <property type="project" value="UniProtKB-UniRule"/>
</dbReference>
<dbReference type="GO" id="GO:0006212">
    <property type="term" value="P:uracil catabolic process"/>
    <property type="evidence" value="ECO:0007669"/>
    <property type="project" value="UniProtKB-UniRule"/>
</dbReference>
<dbReference type="CDD" id="cd00431">
    <property type="entry name" value="cysteine_hydrolases"/>
    <property type="match status" value="1"/>
</dbReference>
<dbReference type="FunFam" id="3.40.50.850:FF:000004">
    <property type="entry name" value="Peroxyureidoacrylate/ureidoacrylate amidohydrolase RutB"/>
    <property type="match status" value="1"/>
</dbReference>
<dbReference type="Gene3D" id="3.40.50.850">
    <property type="entry name" value="Isochorismatase-like"/>
    <property type="match status" value="1"/>
</dbReference>
<dbReference type="HAMAP" id="MF_00830">
    <property type="entry name" value="RutB"/>
    <property type="match status" value="1"/>
</dbReference>
<dbReference type="InterPro" id="IPR000868">
    <property type="entry name" value="Isochorismatase-like_dom"/>
</dbReference>
<dbReference type="InterPro" id="IPR050272">
    <property type="entry name" value="Isochorismatase-like_hydrls"/>
</dbReference>
<dbReference type="InterPro" id="IPR036380">
    <property type="entry name" value="Isochorismatase-like_sf"/>
</dbReference>
<dbReference type="InterPro" id="IPR019916">
    <property type="entry name" value="RutB"/>
</dbReference>
<dbReference type="NCBIfam" id="TIGR03614">
    <property type="entry name" value="RutB"/>
    <property type="match status" value="1"/>
</dbReference>
<dbReference type="PANTHER" id="PTHR43540:SF6">
    <property type="entry name" value="ISOCHORISMATASE-LIKE DOMAIN-CONTAINING PROTEIN"/>
    <property type="match status" value="1"/>
</dbReference>
<dbReference type="PANTHER" id="PTHR43540">
    <property type="entry name" value="PEROXYUREIDOACRYLATE/UREIDOACRYLATE AMIDOHYDROLASE-RELATED"/>
    <property type="match status" value="1"/>
</dbReference>
<dbReference type="Pfam" id="PF00857">
    <property type="entry name" value="Isochorismatase"/>
    <property type="match status" value="1"/>
</dbReference>
<dbReference type="SUPFAM" id="SSF52499">
    <property type="entry name" value="Isochorismatase-like hydrolases"/>
    <property type="match status" value="1"/>
</dbReference>
<accession>B1IV86</accession>
<organism>
    <name type="scientific">Escherichia coli (strain ATCC 8739 / DSM 1576 / NBRC 3972 / NCIMB 8545 / WDCM 00012 / Crooks)</name>
    <dbReference type="NCBI Taxonomy" id="481805"/>
    <lineage>
        <taxon>Bacteria</taxon>
        <taxon>Pseudomonadati</taxon>
        <taxon>Pseudomonadota</taxon>
        <taxon>Gammaproteobacteria</taxon>
        <taxon>Enterobacterales</taxon>
        <taxon>Enterobacteriaceae</taxon>
        <taxon>Escherichia</taxon>
    </lineage>
</organism>
<comment type="function">
    <text evidence="1">Hydrolyzes ureidoacrylate to form aminoacrylate and carbamate. The carbamate hydrolyzes spontaneously, thereby releasing one of the nitrogen atoms of the pyrimidine ring as ammonia and one of its carbon atoms as CO2.</text>
</comment>
<comment type="catalytic activity">
    <reaction evidence="1">
        <text>(Z)-3-ureidoacrylate + H2O + H(+) = (Z)-3-aminoacrylate + NH4(+) + CO2</text>
        <dbReference type="Rhea" id="RHEA:42624"/>
        <dbReference type="ChEBI" id="CHEBI:15377"/>
        <dbReference type="ChEBI" id="CHEBI:15378"/>
        <dbReference type="ChEBI" id="CHEBI:16526"/>
        <dbReference type="ChEBI" id="CHEBI:28938"/>
        <dbReference type="ChEBI" id="CHEBI:59891"/>
        <dbReference type="ChEBI" id="CHEBI:59894"/>
        <dbReference type="EC" id="3.5.1.110"/>
    </reaction>
</comment>
<comment type="catalytic activity">
    <reaction evidence="1">
        <text>(Z)-3-ureidoacrylate + H2O = (Z)-3-aminoacrylate + carbamate + H(+)</text>
        <dbReference type="Rhea" id="RHEA:31603"/>
        <dbReference type="ChEBI" id="CHEBI:13941"/>
        <dbReference type="ChEBI" id="CHEBI:15377"/>
        <dbReference type="ChEBI" id="CHEBI:15378"/>
        <dbReference type="ChEBI" id="CHEBI:59891"/>
        <dbReference type="ChEBI" id="CHEBI:59894"/>
    </reaction>
</comment>
<comment type="catalytic activity">
    <reaction evidence="1">
        <text>(Z)-2-methylureidoacrylate + H2O + H(+) = (Z)-2-methylaminoacrylate + NH4(+) + CO2</text>
        <dbReference type="Rhea" id="RHEA:42620"/>
        <dbReference type="ChEBI" id="CHEBI:15377"/>
        <dbReference type="ChEBI" id="CHEBI:15378"/>
        <dbReference type="ChEBI" id="CHEBI:16526"/>
        <dbReference type="ChEBI" id="CHEBI:28938"/>
        <dbReference type="ChEBI" id="CHEBI:143783"/>
        <dbReference type="ChEBI" id="CHEBI:145735"/>
        <dbReference type="EC" id="3.5.1.110"/>
    </reaction>
</comment>
<comment type="induction">
    <text evidence="1">Up-regulated by the nitrogen regulatory protein C (NtrC also called GlnG) and repressed by RutR.</text>
</comment>
<comment type="similarity">
    <text evidence="1">Belongs to the isochorismatase family. RutB subfamily.</text>
</comment>
<proteinExistence type="inferred from homology"/>
<evidence type="ECO:0000255" key="1">
    <source>
        <dbReference type="HAMAP-Rule" id="MF_00830"/>
    </source>
</evidence>
<sequence length="231" mass="25360">MMTTLTARPEAITFDPQQSALIVVDMQNAYATPGGYLDLAGFDVSTTRPVIANIQTAVTAARAAGMLIIWFQNGWDEQYVEAGGPGSPNFHKSNALKTMRKQPQLQGKLLAKGSWDYQLVDELVPQPGDIVLPKPRYSGFFNTPLDSILRSRGIRHLVFTGIATNVCVESTLRDGFFLEYFGVVLEDATHQAGPEFAQKAALFNIETFFGWVSDVETFCDALSPTSFARIA</sequence>
<keyword id="KW-0378">Hydrolase</keyword>
<gene>
    <name evidence="1" type="primary">rutB</name>
    <name type="ordered locus">EcolC_2584</name>
</gene>
<protein>
    <recommendedName>
        <fullName evidence="1">Ureidoacrylate amidohydrolase RutB</fullName>
        <ecNumber evidence="1">3.5.1.110</ecNumber>
    </recommendedName>
</protein>
<feature type="chain" id="PRO_0000402658" description="Ureidoacrylate amidohydrolase RutB">
    <location>
        <begin position="1"/>
        <end position="231"/>
    </location>
</feature>
<feature type="active site" description="Proton acceptor" evidence="1">
    <location>
        <position position="25"/>
    </location>
</feature>
<feature type="active site" evidence="1">
    <location>
        <position position="134"/>
    </location>
</feature>
<feature type="active site" description="Nucleophile" evidence="1">
    <location>
        <position position="167"/>
    </location>
</feature>
<reference key="1">
    <citation type="submission" date="2008-02" db="EMBL/GenBank/DDBJ databases">
        <title>Complete sequence of Escherichia coli C str. ATCC 8739.</title>
        <authorList>
            <person name="Copeland A."/>
            <person name="Lucas S."/>
            <person name="Lapidus A."/>
            <person name="Glavina del Rio T."/>
            <person name="Dalin E."/>
            <person name="Tice H."/>
            <person name="Bruce D."/>
            <person name="Goodwin L."/>
            <person name="Pitluck S."/>
            <person name="Kiss H."/>
            <person name="Brettin T."/>
            <person name="Detter J.C."/>
            <person name="Han C."/>
            <person name="Kuske C.R."/>
            <person name="Schmutz J."/>
            <person name="Larimer F."/>
            <person name="Land M."/>
            <person name="Hauser L."/>
            <person name="Kyrpides N."/>
            <person name="Mikhailova N."/>
            <person name="Ingram L."/>
            <person name="Richardson P."/>
        </authorList>
    </citation>
    <scope>NUCLEOTIDE SEQUENCE [LARGE SCALE GENOMIC DNA]</scope>
    <source>
        <strain>ATCC 8739 / DSM 1576 / NBRC 3972 / NCIMB 8545 / WDCM 00012 / Crooks</strain>
    </source>
</reference>
<name>RUTB_ECOLC</name>